<name>TGT_THET8</name>
<accession>Q5SLI7</accession>
<protein>
    <recommendedName>
        <fullName evidence="1">Queuine tRNA-ribosyltransferase</fullName>
        <ecNumber evidence="1">2.4.2.29</ecNumber>
    </recommendedName>
    <alternativeName>
        <fullName evidence="1">Guanine insertion enzyme</fullName>
    </alternativeName>
    <alternativeName>
        <fullName evidence="1">tRNA-guanine transglycosylase</fullName>
    </alternativeName>
</protein>
<feature type="chain" id="PRO_0000135547" description="Queuine tRNA-ribosyltransferase">
    <location>
        <begin position="1"/>
        <end position="385"/>
    </location>
</feature>
<feature type="region of interest" description="RNA binding" evidence="1">
    <location>
        <begin position="246"/>
        <end position="252"/>
    </location>
</feature>
<feature type="region of interest" description="RNA binding; important for wobble base 34 recognition" evidence="1">
    <location>
        <begin position="270"/>
        <end position="274"/>
    </location>
</feature>
<feature type="active site" description="Proton acceptor" evidence="1">
    <location>
        <position position="92"/>
    </location>
</feature>
<feature type="active site" description="Nucleophile" evidence="1">
    <location>
        <position position="265"/>
    </location>
</feature>
<feature type="binding site" evidence="1">
    <location>
        <begin position="92"/>
        <end position="96"/>
    </location>
    <ligand>
        <name>substrate</name>
    </ligand>
</feature>
<feature type="binding site" evidence="1">
    <location>
        <position position="146"/>
    </location>
    <ligand>
        <name>substrate</name>
    </ligand>
</feature>
<feature type="binding site" evidence="1">
    <location>
        <position position="188"/>
    </location>
    <ligand>
        <name>substrate</name>
    </ligand>
</feature>
<feature type="binding site" evidence="1">
    <location>
        <position position="215"/>
    </location>
    <ligand>
        <name>substrate</name>
    </ligand>
</feature>
<feature type="binding site" evidence="1">
    <location>
        <position position="303"/>
    </location>
    <ligand>
        <name>Zn(2+)</name>
        <dbReference type="ChEBI" id="CHEBI:29105"/>
    </ligand>
</feature>
<feature type="binding site" evidence="1">
    <location>
        <position position="305"/>
    </location>
    <ligand>
        <name>Zn(2+)</name>
        <dbReference type="ChEBI" id="CHEBI:29105"/>
    </ligand>
</feature>
<feature type="binding site" evidence="1">
    <location>
        <position position="308"/>
    </location>
    <ligand>
        <name>Zn(2+)</name>
        <dbReference type="ChEBI" id="CHEBI:29105"/>
    </ligand>
</feature>
<feature type="binding site" evidence="1">
    <location>
        <position position="334"/>
    </location>
    <ligand>
        <name>Zn(2+)</name>
        <dbReference type="ChEBI" id="CHEBI:29105"/>
    </ligand>
</feature>
<sequence length="385" mass="42826">MDPFRFQVEARAGRARVGRLFTPHGAVETPLFMPVGTAGSVKGLMPKDLEAIGSQVLLTNTYHLLLRPGPERVRALGGLHGFAGWKGPWLTDSGGFQVMSLGHMRRIDEEGVVFQSHLDGRLIKLTPERSIAVQEALGADLIMAFDECPPYPSPREYLEASLERTLRWLERSLKAKTRPDQALFGIAQGGTDPELRRRSTLETIRFDLPGYAIGGLAVGEPKEAMFAMVELSTRLLPEDRPRYLMGVGHPEDLVAAMGLGVDLFDCVYPTRTGRFGSALVPEGRLNLKNARFLEDRRPLEEGCDCYTCQTFGRAYLAHLVRAGEMLGGILLSLHNLRHLHRLTEAARQAIREGRYGDFAREFARRRFGREVPPWFREALAAGGHG</sequence>
<organism>
    <name type="scientific">Thermus thermophilus (strain ATCC 27634 / DSM 579 / HB8)</name>
    <dbReference type="NCBI Taxonomy" id="300852"/>
    <lineage>
        <taxon>Bacteria</taxon>
        <taxon>Thermotogati</taxon>
        <taxon>Deinococcota</taxon>
        <taxon>Deinococci</taxon>
        <taxon>Thermales</taxon>
        <taxon>Thermaceae</taxon>
        <taxon>Thermus</taxon>
    </lineage>
</organism>
<evidence type="ECO:0000255" key="1">
    <source>
        <dbReference type="HAMAP-Rule" id="MF_00168"/>
    </source>
</evidence>
<dbReference type="EC" id="2.4.2.29" evidence="1"/>
<dbReference type="EMBL" id="AP008226">
    <property type="protein sequence ID" value="BAD70129.1"/>
    <property type="molecule type" value="Genomic_DNA"/>
</dbReference>
<dbReference type="RefSeq" id="WP_011227845.1">
    <property type="nucleotide sequence ID" value="NC_006461.1"/>
</dbReference>
<dbReference type="RefSeq" id="YP_143572.1">
    <property type="nucleotide sequence ID" value="NC_006461.1"/>
</dbReference>
<dbReference type="SMR" id="Q5SLI7"/>
<dbReference type="EnsemblBacteria" id="BAD70129">
    <property type="protein sequence ID" value="BAD70129"/>
    <property type="gene ID" value="BAD70129"/>
</dbReference>
<dbReference type="GeneID" id="3168583"/>
<dbReference type="KEGG" id="ttj:TTHA0306"/>
<dbReference type="PATRIC" id="fig|300852.9.peg.306"/>
<dbReference type="eggNOG" id="COG0343">
    <property type="taxonomic scope" value="Bacteria"/>
</dbReference>
<dbReference type="HOGENOM" id="CLU_022060_0_1_0"/>
<dbReference type="PhylomeDB" id="Q5SLI7"/>
<dbReference type="UniPathway" id="UPA00392"/>
<dbReference type="Proteomes" id="UP000000532">
    <property type="component" value="Chromosome"/>
</dbReference>
<dbReference type="GO" id="GO:0005829">
    <property type="term" value="C:cytosol"/>
    <property type="evidence" value="ECO:0007669"/>
    <property type="project" value="TreeGrafter"/>
</dbReference>
<dbReference type="GO" id="GO:0046872">
    <property type="term" value="F:metal ion binding"/>
    <property type="evidence" value="ECO:0007669"/>
    <property type="project" value="UniProtKB-KW"/>
</dbReference>
<dbReference type="GO" id="GO:0008479">
    <property type="term" value="F:tRNA-guanosine(34) queuine transglycosylase activity"/>
    <property type="evidence" value="ECO:0007669"/>
    <property type="project" value="UniProtKB-UniRule"/>
</dbReference>
<dbReference type="GO" id="GO:0008616">
    <property type="term" value="P:queuosine biosynthetic process"/>
    <property type="evidence" value="ECO:0007669"/>
    <property type="project" value="UniProtKB-UniRule"/>
</dbReference>
<dbReference type="GO" id="GO:0101030">
    <property type="term" value="P:tRNA-guanine transglycosylation"/>
    <property type="evidence" value="ECO:0007669"/>
    <property type="project" value="InterPro"/>
</dbReference>
<dbReference type="FunFam" id="3.20.20.105:FF:000001">
    <property type="entry name" value="Queuine tRNA-ribosyltransferase"/>
    <property type="match status" value="1"/>
</dbReference>
<dbReference type="Gene3D" id="3.20.20.105">
    <property type="entry name" value="Queuine tRNA-ribosyltransferase-like"/>
    <property type="match status" value="1"/>
</dbReference>
<dbReference type="HAMAP" id="MF_00168">
    <property type="entry name" value="Q_tRNA_Tgt"/>
    <property type="match status" value="1"/>
</dbReference>
<dbReference type="InterPro" id="IPR004803">
    <property type="entry name" value="TGT"/>
</dbReference>
<dbReference type="InterPro" id="IPR036511">
    <property type="entry name" value="TGT-like_sf"/>
</dbReference>
<dbReference type="InterPro" id="IPR002616">
    <property type="entry name" value="tRNA_ribo_trans-like"/>
</dbReference>
<dbReference type="NCBIfam" id="TIGR00430">
    <property type="entry name" value="Q_tRNA_tgt"/>
    <property type="match status" value="1"/>
</dbReference>
<dbReference type="NCBIfam" id="TIGR00449">
    <property type="entry name" value="tgt_general"/>
    <property type="match status" value="1"/>
</dbReference>
<dbReference type="PANTHER" id="PTHR43530">
    <property type="entry name" value="QUEUINE TRNA-RIBOSYLTRANSFERASE CATALYTIC SUBUNIT 1"/>
    <property type="match status" value="1"/>
</dbReference>
<dbReference type="PANTHER" id="PTHR43530:SF1">
    <property type="entry name" value="QUEUINE TRNA-RIBOSYLTRANSFERASE CATALYTIC SUBUNIT 1"/>
    <property type="match status" value="1"/>
</dbReference>
<dbReference type="Pfam" id="PF01702">
    <property type="entry name" value="TGT"/>
    <property type="match status" value="1"/>
</dbReference>
<dbReference type="SUPFAM" id="SSF51713">
    <property type="entry name" value="tRNA-guanine transglycosylase"/>
    <property type="match status" value="1"/>
</dbReference>
<reference key="1">
    <citation type="submission" date="2004-11" db="EMBL/GenBank/DDBJ databases">
        <title>Complete genome sequence of Thermus thermophilus HB8.</title>
        <authorList>
            <person name="Masui R."/>
            <person name="Kurokawa K."/>
            <person name="Nakagawa N."/>
            <person name="Tokunaga F."/>
            <person name="Koyama Y."/>
            <person name="Shibata T."/>
            <person name="Oshima T."/>
            <person name="Yokoyama S."/>
            <person name="Yasunaga T."/>
            <person name="Kuramitsu S."/>
        </authorList>
    </citation>
    <scope>NUCLEOTIDE SEQUENCE [LARGE SCALE GENOMIC DNA]</scope>
    <source>
        <strain>ATCC 27634 / DSM 579 / HB8</strain>
    </source>
</reference>
<keyword id="KW-0328">Glycosyltransferase</keyword>
<keyword id="KW-0479">Metal-binding</keyword>
<keyword id="KW-0671">Queuosine biosynthesis</keyword>
<keyword id="KW-1185">Reference proteome</keyword>
<keyword id="KW-0808">Transferase</keyword>
<keyword id="KW-0819">tRNA processing</keyword>
<keyword id="KW-0862">Zinc</keyword>
<comment type="function">
    <text evidence="1">Catalyzes the base-exchange of a guanine (G) residue with the queuine precursor 7-aminomethyl-7-deazaguanine (PreQ1) at position 34 (anticodon wobble position) in tRNAs with GU(N) anticodons (tRNA-Asp, -Asn, -His and -Tyr). Catalysis occurs through a double-displacement mechanism. The nucleophile active site attacks the C1' of nucleotide 34 to detach the guanine base from the RNA, forming a covalent enzyme-RNA intermediate. The proton acceptor active site deprotonates the incoming PreQ1, allowing a nucleophilic attack on the C1' of the ribose to form the product. After dissociation, two additional enzymatic reactions on the tRNA convert PreQ1 to queuine (Q), resulting in the hypermodified nucleoside queuosine (7-(((4,5-cis-dihydroxy-2-cyclopenten-1-yl)amino)methyl)-7-deazaguanosine).</text>
</comment>
<comment type="catalytic activity">
    <reaction evidence="1">
        <text>7-aminomethyl-7-carbaguanine + guanosine(34) in tRNA = 7-aminomethyl-7-carbaguanosine(34) in tRNA + guanine</text>
        <dbReference type="Rhea" id="RHEA:24104"/>
        <dbReference type="Rhea" id="RHEA-COMP:10341"/>
        <dbReference type="Rhea" id="RHEA-COMP:10342"/>
        <dbReference type="ChEBI" id="CHEBI:16235"/>
        <dbReference type="ChEBI" id="CHEBI:58703"/>
        <dbReference type="ChEBI" id="CHEBI:74269"/>
        <dbReference type="ChEBI" id="CHEBI:82833"/>
        <dbReference type="EC" id="2.4.2.29"/>
    </reaction>
</comment>
<comment type="cofactor">
    <cofactor evidence="1">
        <name>Zn(2+)</name>
        <dbReference type="ChEBI" id="CHEBI:29105"/>
    </cofactor>
    <text evidence="1">Binds 1 zinc ion per subunit.</text>
</comment>
<comment type="pathway">
    <text evidence="1">tRNA modification; tRNA-queuosine biosynthesis.</text>
</comment>
<comment type="subunit">
    <text evidence="1">Homodimer. Within each dimer, one monomer is responsible for RNA recognition and catalysis, while the other monomer binds to the replacement base PreQ1.</text>
</comment>
<comment type="similarity">
    <text evidence="1">Belongs to the queuine tRNA-ribosyltransferase family.</text>
</comment>
<proteinExistence type="inferred from homology"/>
<gene>
    <name evidence="1" type="primary">tgt</name>
    <name type="ordered locus">TTHA0306</name>
</gene>